<gene>
    <name evidence="1" type="primary">hprK</name>
    <name type="synonym">ptsK</name>
    <name type="ordered locus">XAC2975</name>
</gene>
<proteinExistence type="inferred from homology"/>
<reference key="1">
    <citation type="journal article" date="2002" name="Nature">
        <title>Comparison of the genomes of two Xanthomonas pathogens with differing host specificities.</title>
        <authorList>
            <person name="da Silva A.C.R."/>
            <person name="Ferro J.A."/>
            <person name="Reinach F.C."/>
            <person name="Farah C.S."/>
            <person name="Furlan L.R."/>
            <person name="Quaggio R.B."/>
            <person name="Monteiro-Vitorello C.B."/>
            <person name="Van Sluys M.A."/>
            <person name="Almeida N.F. Jr."/>
            <person name="Alves L.M.C."/>
            <person name="do Amaral A.M."/>
            <person name="Bertolini M.C."/>
            <person name="Camargo L.E.A."/>
            <person name="Camarotte G."/>
            <person name="Cannavan F."/>
            <person name="Cardozo J."/>
            <person name="Chambergo F."/>
            <person name="Ciapina L.P."/>
            <person name="Cicarelli R.M.B."/>
            <person name="Coutinho L.L."/>
            <person name="Cursino-Santos J.R."/>
            <person name="El-Dorry H."/>
            <person name="Faria J.B."/>
            <person name="Ferreira A.J.S."/>
            <person name="Ferreira R.C.C."/>
            <person name="Ferro M.I.T."/>
            <person name="Formighieri E.F."/>
            <person name="Franco M.C."/>
            <person name="Greggio C.C."/>
            <person name="Gruber A."/>
            <person name="Katsuyama A.M."/>
            <person name="Kishi L.T."/>
            <person name="Leite R.P."/>
            <person name="Lemos E.G.M."/>
            <person name="Lemos M.V.F."/>
            <person name="Locali E.C."/>
            <person name="Machado M.A."/>
            <person name="Madeira A.M.B.N."/>
            <person name="Martinez-Rossi N.M."/>
            <person name="Martins E.C."/>
            <person name="Meidanis J."/>
            <person name="Menck C.F.M."/>
            <person name="Miyaki C.Y."/>
            <person name="Moon D.H."/>
            <person name="Moreira L.M."/>
            <person name="Novo M.T.M."/>
            <person name="Okura V.K."/>
            <person name="Oliveira M.C."/>
            <person name="Oliveira V.R."/>
            <person name="Pereira H.A."/>
            <person name="Rossi A."/>
            <person name="Sena J.A.D."/>
            <person name="Silva C."/>
            <person name="de Souza R.F."/>
            <person name="Spinola L.A.F."/>
            <person name="Takita M.A."/>
            <person name="Tamura R.E."/>
            <person name="Teixeira E.C."/>
            <person name="Tezza R.I.D."/>
            <person name="Trindade dos Santos M."/>
            <person name="Truffi D."/>
            <person name="Tsai S.M."/>
            <person name="White F.F."/>
            <person name="Setubal J.C."/>
            <person name="Kitajima J.P."/>
        </authorList>
    </citation>
    <scope>NUCLEOTIDE SEQUENCE [LARGE SCALE GENOMIC DNA]</scope>
    <source>
        <strain>306</strain>
    </source>
</reference>
<evidence type="ECO:0000255" key="1">
    <source>
        <dbReference type="HAMAP-Rule" id="MF_01249"/>
    </source>
</evidence>
<accession>Q8PIC3</accession>
<comment type="function">
    <text evidence="1">Catalyzes the ATP- as well as the pyrophosphate-dependent phosphorylation of a specific serine residue in HPr, a phosphocarrier protein of the phosphoenolpyruvate-dependent sugar phosphotransferase system (PTS). HprK/P also catalyzes the pyrophosphate-producing, inorganic phosphate-dependent dephosphorylation (phosphorolysis) of seryl-phosphorylated HPr (P-Ser-HPr).</text>
</comment>
<comment type="catalytic activity">
    <reaction evidence="1">
        <text>[HPr protein]-L-serine + ATP = [HPr protein]-O-phospho-L-serine + ADP + H(+)</text>
        <dbReference type="Rhea" id="RHEA:46600"/>
        <dbReference type="Rhea" id="RHEA-COMP:11602"/>
        <dbReference type="Rhea" id="RHEA-COMP:11603"/>
        <dbReference type="ChEBI" id="CHEBI:15378"/>
        <dbReference type="ChEBI" id="CHEBI:29999"/>
        <dbReference type="ChEBI" id="CHEBI:30616"/>
        <dbReference type="ChEBI" id="CHEBI:83421"/>
        <dbReference type="ChEBI" id="CHEBI:456216"/>
    </reaction>
</comment>
<comment type="catalytic activity">
    <reaction evidence="1">
        <text>[HPr protein]-O-phospho-L-serine + phosphate + H(+) = [HPr protein]-L-serine + diphosphate</text>
        <dbReference type="Rhea" id="RHEA:46604"/>
        <dbReference type="Rhea" id="RHEA-COMP:11602"/>
        <dbReference type="Rhea" id="RHEA-COMP:11603"/>
        <dbReference type="ChEBI" id="CHEBI:15378"/>
        <dbReference type="ChEBI" id="CHEBI:29999"/>
        <dbReference type="ChEBI" id="CHEBI:33019"/>
        <dbReference type="ChEBI" id="CHEBI:43474"/>
        <dbReference type="ChEBI" id="CHEBI:83421"/>
    </reaction>
</comment>
<comment type="cofactor">
    <cofactor evidence="1">
        <name>Mg(2+)</name>
        <dbReference type="ChEBI" id="CHEBI:18420"/>
    </cofactor>
</comment>
<comment type="subunit">
    <text evidence="1">Homohexamer.</text>
</comment>
<comment type="domain">
    <text evidence="1">The Walker A ATP-binding motif also binds Pi and PPi.</text>
</comment>
<comment type="miscellaneous">
    <text evidence="1">Both phosphorylation and phosphorolysis are carried out by the same active site and suggest a common mechanism for both reactions.</text>
</comment>
<comment type="similarity">
    <text evidence="1">Belongs to the HPrK/P family.</text>
</comment>
<protein>
    <recommendedName>
        <fullName evidence="1">HPr kinase/phosphorylase</fullName>
        <shortName evidence="1">HPrK/P</shortName>
        <ecNumber evidence="1">2.7.11.-</ecNumber>
        <ecNumber evidence="1">2.7.4.-</ecNumber>
    </recommendedName>
    <alternativeName>
        <fullName evidence="1">HPr(Ser) kinase/phosphorylase</fullName>
    </alternativeName>
</protein>
<sequence length="316" mass="35170">MNTSITARELFDQQRDKLALRWVAGPKGEHREIQANSNNARRPSLAGYLNVIYPNKVQILGTEELAWLDSLDARQRWETIEKIIQVQPLALAISKNQSCPEDLRAAADESNTPLWISSKRGHELLNHLSYHLARTLAPRVTLHGVFMEIYSIGVLITGEAGSGKSELALELLSRGHRLVADDAPEFTQIAPDVLDGTCPELLQDLLEVRGLGVLNVRDMFGDTAVKKNKYLRLIVHLTRPMTEPTPSGYERLTGDSGSRHVLDLDVPLITLPVMPGRNLAVLTEAATRLHILRTKGIDPAAMFIARHSNLLERRTP</sequence>
<organism>
    <name type="scientific">Xanthomonas axonopodis pv. citri (strain 306)</name>
    <dbReference type="NCBI Taxonomy" id="190486"/>
    <lineage>
        <taxon>Bacteria</taxon>
        <taxon>Pseudomonadati</taxon>
        <taxon>Pseudomonadota</taxon>
        <taxon>Gammaproteobacteria</taxon>
        <taxon>Lysobacterales</taxon>
        <taxon>Lysobacteraceae</taxon>
        <taxon>Xanthomonas</taxon>
    </lineage>
</organism>
<name>HPRK_XANAC</name>
<dbReference type="EC" id="2.7.11.-" evidence="1"/>
<dbReference type="EC" id="2.7.4.-" evidence="1"/>
<dbReference type="EMBL" id="AE008923">
    <property type="protein sequence ID" value="AAM37820.1"/>
    <property type="molecule type" value="Genomic_DNA"/>
</dbReference>
<dbReference type="RefSeq" id="WP_011051951.1">
    <property type="nucleotide sequence ID" value="NC_003919.1"/>
</dbReference>
<dbReference type="SMR" id="Q8PIC3"/>
<dbReference type="GeneID" id="66912050"/>
<dbReference type="KEGG" id="xac:XAC2975"/>
<dbReference type="eggNOG" id="COG1493">
    <property type="taxonomic scope" value="Bacteria"/>
</dbReference>
<dbReference type="HOGENOM" id="CLU_052030_0_2_6"/>
<dbReference type="Proteomes" id="UP000000576">
    <property type="component" value="Chromosome"/>
</dbReference>
<dbReference type="GO" id="GO:0005524">
    <property type="term" value="F:ATP binding"/>
    <property type="evidence" value="ECO:0007669"/>
    <property type="project" value="UniProtKB-UniRule"/>
</dbReference>
<dbReference type="GO" id="GO:0000287">
    <property type="term" value="F:magnesium ion binding"/>
    <property type="evidence" value="ECO:0007669"/>
    <property type="project" value="UniProtKB-UniRule"/>
</dbReference>
<dbReference type="GO" id="GO:0000155">
    <property type="term" value="F:phosphorelay sensor kinase activity"/>
    <property type="evidence" value="ECO:0007669"/>
    <property type="project" value="InterPro"/>
</dbReference>
<dbReference type="GO" id="GO:0004674">
    <property type="term" value="F:protein serine/threonine kinase activity"/>
    <property type="evidence" value="ECO:0007669"/>
    <property type="project" value="UniProtKB-KW"/>
</dbReference>
<dbReference type="GO" id="GO:0004712">
    <property type="term" value="F:protein serine/threonine/tyrosine kinase activity"/>
    <property type="evidence" value="ECO:0007669"/>
    <property type="project" value="UniProtKB-UniRule"/>
</dbReference>
<dbReference type="GO" id="GO:0006109">
    <property type="term" value="P:regulation of carbohydrate metabolic process"/>
    <property type="evidence" value="ECO:0007669"/>
    <property type="project" value="UniProtKB-UniRule"/>
</dbReference>
<dbReference type="CDD" id="cd01918">
    <property type="entry name" value="HprK_C"/>
    <property type="match status" value="1"/>
</dbReference>
<dbReference type="FunFam" id="3.40.50.300:FF:000174">
    <property type="entry name" value="HPr kinase/phosphorylase"/>
    <property type="match status" value="1"/>
</dbReference>
<dbReference type="Gene3D" id="3.40.1390.20">
    <property type="entry name" value="HprK N-terminal domain-like"/>
    <property type="match status" value="1"/>
</dbReference>
<dbReference type="Gene3D" id="3.40.50.300">
    <property type="entry name" value="P-loop containing nucleotide triphosphate hydrolases"/>
    <property type="match status" value="1"/>
</dbReference>
<dbReference type="HAMAP" id="MF_01249">
    <property type="entry name" value="HPr_kinase"/>
    <property type="match status" value="1"/>
</dbReference>
<dbReference type="InterPro" id="IPR003755">
    <property type="entry name" value="HPr(Ser)_kin/Pase"/>
</dbReference>
<dbReference type="InterPro" id="IPR011104">
    <property type="entry name" value="Hpr_kin/Pase_C"/>
</dbReference>
<dbReference type="InterPro" id="IPR011126">
    <property type="entry name" value="Hpr_kin/Pase_Hpr_N"/>
</dbReference>
<dbReference type="InterPro" id="IPR027417">
    <property type="entry name" value="P-loop_NTPase"/>
</dbReference>
<dbReference type="InterPro" id="IPR028979">
    <property type="entry name" value="Ser_kin/Pase_Hpr-like_N_sf"/>
</dbReference>
<dbReference type="NCBIfam" id="TIGR00679">
    <property type="entry name" value="hpr-ser"/>
    <property type="match status" value="1"/>
</dbReference>
<dbReference type="PANTHER" id="PTHR30305:SF1">
    <property type="entry name" value="HPR KINASE_PHOSPHORYLASE"/>
    <property type="match status" value="1"/>
</dbReference>
<dbReference type="PANTHER" id="PTHR30305">
    <property type="entry name" value="PROTEIN YJDM-RELATED"/>
    <property type="match status" value="1"/>
</dbReference>
<dbReference type="Pfam" id="PF07475">
    <property type="entry name" value="Hpr_kinase_C"/>
    <property type="match status" value="1"/>
</dbReference>
<dbReference type="Pfam" id="PF02603">
    <property type="entry name" value="Hpr_kinase_N"/>
    <property type="match status" value="1"/>
</dbReference>
<dbReference type="SUPFAM" id="SSF75138">
    <property type="entry name" value="HprK N-terminal domain-like"/>
    <property type="match status" value="1"/>
</dbReference>
<dbReference type="SUPFAM" id="SSF53795">
    <property type="entry name" value="PEP carboxykinase-like"/>
    <property type="match status" value="1"/>
</dbReference>
<feature type="chain" id="PRO_0000059006" description="HPr kinase/phosphorylase">
    <location>
        <begin position="1"/>
        <end position="316"/>
    </location>
</feature>
<feature type="region of interest" description="Important for the catalytic mechanism of both phosphorylation and dephosphorylation" evidence="1">
    <location>
        <begin position="206"/>
        <end position="215"/>
    </location>
</feature>
<feature type="region of interest" description="Important for the catalytic mechanism of dephosphorylation" evidence="1">
    <location>
        <begin position="272"/>
        <end position="277"/>
    </location>
</feature>
<feature type="active site" evidence="1">
    <location>
        <position position="143"/>
    </location>
</feature>
<feature type="active site" evidence="1">
    <location>
        <position position="164"/>
    </location>
</feature>
<feature type="active site" description="Proton acceptor; for phosphorylation activity. Proton donor; for dephosphorylation activity" evidence="1">
    <location>
        <position position="182"/>
    </location>
</feature>
<feature type="active site" evidence="1">
    <location>
        <position position="251"/>
    </location>
</feature>
<feature type="binding site" evidence="1">
    <location>
        <begin position="158"/>
        <end position="165"/>
    </location>
    <ligand>
        <name>ATP</name>
        <dbReference type="ChEBI" id="CHEBI:30616"/>
    </ligand>
</feature>
<feature type="binding site" evidence="1">
    <location>
        <position position="165"/>
    </location>
    <ligand>
        <name>Mg(2+)</name>
        <dbReference type="ChEBI" id="CHEBI:18420"/>
    </ligand>
</feature>
<feature type="binding site" evidence="1">
    <location>
        <position position="207"/>
    </location>
    <ligand>
        <name>Mg(2+)</name>
        <dbReference type="ChEBI" id="CHEBI:18420"/>
    </ligand>
</feature>
<keyword id="KW-0067">ATP-binding</keyword>
<keyword id="KW-0418">Kinase</keyword>
<keyword id="KW-0460">Magnesium</keyword>
<keyword id="KW-0479">Metal-binding</keyword>
<keyword id="KW-0511">Multifunctional enzyme</keyword>
<keyword id="KW-0547">Nucleotide-binding</keyword>
<keyword id="KW-0723">Serine/threonine-protein kinase</keyword>
<keyword id="KW-0808">Transferase</keyword>